<reference key="1">
    <citation type="journal article" date="2003" name="Science">
        <title>Role of mobile DNA in the evolution of vancomycin-resistant Enterococcus faecalis.</title>
        <authorList>
            <person name="Paulsen I.T."/>
            <person name="Banerjei L."/>
            <person name="Myers G.S.A."/>
            <person name="Nelson K.E."/>
            <person name="Seshadri R."/>
            <person name="Read T.D."/>
            <person name="Fouts D.E."/>
            <person name="Eisen J.A."/>
            <person name="Gill S.R."/>
            <person name="Heidelberg J.F."/>
            <person name="Tettelin H."/>
            <person name="Dodson R.J."/>
            <person name="Umayam L.A."/>
            <person name="Brinkac L.M."/>
            <person name="Beanan M.J."/>
            <person name="Daugherty S.C."/>
            <person name="DeBoy R.T."/>
            <person name="Durkin S.A."/>
            <person name="Kolonay J.F."/>
            <person name="Madupu R."/>
            <person name="Nelson W.C."/>
            <person name="Vamathevan J.J."/>
            <person name="Tran B."/>
            <person name="Upton J."/>
            <person name="Hansen T."/>
            <person name="Shetty J."/>
            <person name="Khouri H.M."/>
            <person name="Utterback T.R."/>
            <person name="Radune D."/>
            <person name="Ketchum K.A."/>
            <person name="Dougherty B.A."/>
            <person name="Fraser C.M."/>
        </authorList>
    </citation>
    <scope>NUCLEOTIDE SEQUENCE [LARGE SCALE GENOMIC DNA]</scope>
    <source>
        <strain>ATCC 700802 / V583</strain>
    </source>
</reference>
<name>RS142_ENTFA</name>
<feature type="chain" id="PRO_0000269046" description="Small ribosomal subunit protein uS14B">
    <location>
        <begin position="1"/>
        <end position="89"/>
    </location>
</feature>
<feature type="region of interest" description="Disordered" evidence="2">
    <location>
        <begin position="38"/>
        <end position="61"/>
    </location>
</feature>
<feature type="compositionally biased region" description="Basic and acidic residues" evidence="2">
    <location>
        <begin position="39"/>
        <end position="58"/>
    </location>
</feature>
<protein>
    <recommendedName>
        <fullName evidence="1">Small ribosomal subunit protein uS14B</fullName>
    </recommendedName>
    <alternativeName>
        <fullName evidence="3">30S ribosomal protein S14 2</fullName>
    </alternativeName>
</protein>
<gene>
    <name evidence="1" type="primary">rpsN2</name>
    <name type="synonym">rpsN-3</name>
    <name type="ordered locus">EF_3202</name>
</gene>
<proteinExistence type="inferred from homology"/>
<dbReference type="EMBL" id="AE016830">
    <property type="protein sequence ID" value="AAO82874.1"/>
    <property type="molecule type" value="Genomic_DNA"/>
</dbReference>
<dbReference type="RefSeq" id="NP_816804.1">
    <property type="nucleotide sequence ID" value="NC_004668.1"/>
</dbReference>
<dbReference type="SMR" id="Q82Z70"/>
<dbReference type="STRING" id="226185.EF_3202"/>
<dbReference type="EnsemblBacteria" id="AAO82874">
    <property type="protein sequence ID" value="AAO82874"/>
    <property type="gene ID" value="EF_3202"/>
</dbReference>
<dbReference type="KEGG" id="efa:EF3202"/>
<dbReference type="PATRIC" id="fig|226185.45.peg.378"/>
<dbReference type="eggNOG" id="COG0199">
    <property type="taxonomic scope" value="Bacteria"/>
</dbReference>
<dbReference type="HOGENOM" id="CLU_139869_0_0_9"/>
<dbReference type="Proteomes" id="UP000001415">
    <property type="component" value="Chromosome"/>
</dbReference>
<dbReference type="GO" id="GO:0005737">
    <property type="term" value="C:cytoplasm"/>
    <property type="evidence" value="ECO:0007669"/>
    <property type="project" value="UniProtKB-ARBA"/>
</dbReference>
<dbReference type="GO" id="GO:0015935">
    <property type="term" value="C:small ribosomal subunit"/>
    <property type="evidence" value="ECO:0007669"/>
    <property type="project" value="TreeGrafter"/>
</dbReference>
<dbReference type="GO" id="GO:0019843">
    <property type="term" value="F:rRNA binding"/>
    <property type="evidence" value="ECO:0007669"/>
    <property type="project" value="UniProtKB-UniRule"/>
</dbReference>
<dbReference type="GO" id="GO:0003735">
    <property type="term" value="F:structural constituent of ribosome"/>
    <property type="evidence" value="ECO:0007669"/>
    <property type="project" value="InterPro"/>
</dbReference>
<dbReference type="GO" id="GO:0006412">
    <property type="term" value="P:translation"/>
    <property type="evidence" value="ECO:0007669"/>
    <property type="project" value="UniProtKB-UniRule"/>
</dbReference>
<dbReference type="Gene3D" id="4.10.830.10">
    <property type="entry name" value="30s Ribosomal Protein S14, Chain N"/>
    <property type="match status" value="1"/>
</dbReference>
<dbReference type="HAMAP" id="MF_00537">
    <property type="entry name" value="Ribosomal_uS14_1"/>
    <property type="match status" value="1"/>
</dbReference>
<dbReference type="InterPro" id="IPR001209">
    <property type="entry name" value="Ribosomal_uS14"/>
</dbReference>
<dbReference type="InterPro" id="IPR023036">
    <property type="entry name" value="Ribosomal_uS14_bac/plastid"/>
</dbReference>
<dbReference type="InterPro" id="IPR043140">
    <property type="entry name" value="Ribosomal_uS14_sf"/>
</dbReference>
<dbReference type="NCBIfam" id="NF006477">
    <property type="entry name" value="PRK08881.1"/>
    <property type="match status" value="1"/>
</dbReference>
<dbReference type="PANTHER" id="PTHR19836">
    <property type="entry name" value="30S RIBOSOMAL PROTEIN S14"/>
    <property type="match status" value="1"/>
</dbReference>
<dbReference type="PANTHER" id="PTHR19836:SF19">
    <property type="entry name" value="SMALL RIBOSOMAL SUBUNIT PROTEIN US14M"/>
    <property type="match status" value="1"/>
</dbReference>
<dbReference type="Pfam" id="PF00253">
    <property type="entry name" value="Ribosomal_S14"/>
    <property type="match status" value="1"/>
</dbReference>
<dbReference type="SUPFAM" id="SSF57716">
    <property type="entry name" value="Glucocorticoid receptor-like (DNA-binding domain)"/>
    <property type="match status" value="1"/>
</dbReference>
<sequence>MAKKSKIAKAKKQQAMIAKYAPIRQALKEAGDYEGLSKLPKDAHPSRLKLRDQTDGRPRGYMRKFGMSRIRFRELAHQGLIPGVKKASW</sequence>
<comment type="function">
    <text evidence="1">Binds 16S rRNA, required for the assembly of 30S particles and may also be responsible for determining the conformation of the 16S rRNA at the A site.</text>
</comment>
<comment type="subunit">
    <text evidence="1">Part of the 30S ribosomal subunit. Contacts proteins S3 and S10.</text>
</comment>
<comment type="similarity">
    <text evidence="1">Belongs to the universal ribosomal protein uS14 family.</text>
</comment>
<organism>
    <name type="scientific">Enterococcus faecalis (strain ATCC 700802 / V583)</name>
    <dbReference type="NCBI Taxonomy" id="226185"/>
    <lineage>
        <taxon>Bacteria</taxon>
        <taxon>Bacillati</taxon>
        <taxon>Bacillota</taxon>
        <taxon>Bacilli</taxon>
        <taxon>Lactobacillales</taxon>
        <taxon>Enterococcaceae</taxon>
        <taxon>Enterococcus</taxon>
    </lineage>
</organism>
<evidence type="ECO:0000255" key="1">
    <source>
        <dbReference type="HAMAP-Rule" id="MF_00537"/>
    </source>
</evidence>
<evidence type="ECO:0000256" key="2">
    <source>
        <dbReference type="SAM" id="MobiDB-lite"/>
    </source>
</evidence>
<evidence type="ECO:0000305" key="3"/>
<accession>Q82Z70</accession>
<keyword id="KW-1185">Reference proteome</keyword>
<keyword id="KW-0687">Ribonucleoprotein</keyword>
<keyword id="KW-0689">Ribosomal protein</keyword>
<keyword id="KW-0694">RNA-binding</keyword>
<keyword id="KW-0699">rRNA-binding</keyword>